<geneLocation type="mitochondrion"/>
<gene>
    <name type="primary">MT-CYB</name>
    <name type="synonym">COB</name>
    <name type="synonym">CYTB</name>
    <name type="synonym">MTCYB</name>
</gene>
<accession>Q33401</accession>
<accession>Q8SK53</accession>
<keyword id="KW-0249">Electron transport</keyword>
<keyword id="KW-0349">Heme</keyword>
<keyword id="KW-0408">Iron</keyword>
<keyword id="KW-0472">Membrane</keyword>
<keyword id="KW-0479">Metal-binding</keyword>
<keyword id="KW-0496">Mitochondrion</keyword>
<keyword id="KW-0999">Mitochondrion inner membrane</keyword>
<keyword id="KW-0679">Respiratory chain</keyword>
<keyword id="KW-0812">Transmembrane</keyword>
<keyword id="KW-1133">Transmembrane helix</keyword>
<keyword id="KW-0813">Transport</keyword>
<keyword id="KW-0830">Ubiquinone</keyword>
<feature type="chain" id="PRO_0000060901" description="Cytochrome b">
    <location>
        <begin position="1"/>
        <end position="379"/>
    </location>
</feature>
<feature type="transmembrane region" description="Helical" evidence="2">
    <location>
        <begin position="33"/>
        <end position="53"/>
    </location>
</feature>
<feature type="transmembrane region" description="Helical" evidence="2">
    <location>
        <begin position="77"/>
        <end position="98"/>
    </location>
</feature>
<feature type="transmembrane region" description="Helical" evidence="2">
    <location>
        <begin position="113"/>
        <end position="133"/>
    </location>
</feature>
<feature type="transmembrane region" description="Helical" evidence="2">
    <location>
        <begin position="178"/>
        <end position="198"/>
    </location>
</feature>
<feature type="transmembrane region" description="Helical" evidence="2">
    <location>
        <begin position="226"/>
        <end position="246"/>
    </location>
</feature>
<feature type="transmembrane region" description="Helical" evidence="2">
    <location>
        <begin position="288"/>
        <end position="308"/>
    </location>
</feature>
<feature type="transmembrane region" description="Helical" evidence="2">
    <location>
        <begin position="320"/>
        <end position="340"/>
    </location>
</feature>
<feature type="transmembrane region" description="Helical" evidence="2">
    <location>
        <begin position="347"/>
        <end position="367"/>
    </location>
</feature>
<feature type="binding site" description="axial binding residue" evidence="2">
    <location>
        <position position="83"/>
    </location>
    <ligand>
        <name>heme b</name>
        <dbReference type="ChEBI" id="CHEBI:60344"/>
        <label>b562</label>
    </ligand>
    <ligandPart>
        <name>Fe</name>
        <dbReference type="ChEBI" id="CHEBI:18248"/>
    </ligandPart>
</feature>
<feature type="binding site" description="axial binding residue" evidence="2">
    <location>
        <position position="97"/>
    </location>
    <ligand>
        <name>heme b</name>
        <dbReference type="ChEBI" id="CHEBI:60344"/>
        <label>b566</label>
    </ligand>
    <ligandPart>
        <name>Fe</name>
        <dbReference type="ChEBI" id="CHEBI:18248"/>
    </ligandPart>
</feature>
<feature type="binding site" description="axial binding residue" evidence="2">
    <location>
        <position position="182"/>
    </location>
    <ligand>
        <name>heme b</name>
        <dbReference type="ChEBI" id="CHEBI:60344"/>
        <label>b562</label>
    </ligand>
    <ligandPart>
        <name>Fe</name>
        <dbReference type="ChEBI" id="CHEBI:18248"/>
    </ligandPart>
</feature>
<feature type="binding site" description="axial binding residue" evidence="2">
    <location>
        <position position="196"/>
    </location>
    <ligand>
        <name>heme b</name>
        <dbReference type="ChEBI" id="CHEBI:60344"/>
        <label>b566</label>
    </ligand>
    <ligandPart>
        <name>Fe</name>
        <dbReference type="ChEBI" id="CHEBI:18248"/>
    </ligandPart>
</feature>
<feature type="binding site" evidence="2">
    <location>
        <position position="201"/>
    </location>
    <ligand>
        <name>a ubiquinone</name>
        <dbReference type="ChEBI" id="CHEBI:16389"/>
    </ligand>
</feature>
<feature type="sequence conflict" description="In Ref. 3; AAL79374." evidence="5" ref="3">
    <original>R</original>
    <variation>A</variation>
    <location>
        <position position="277"/>
    </location>
</feature>
<feature type="sequence conflict" description="In Ref. 3; AAL79374." evidence="5" ref="3">
    <original>I</original>
    <variation>T</variation>
    <location>
        <position position="327"/>
    </location>
</feature>
<proteinExistence type="inferred from homology"/>
<sequence>MTNIRKSHPLIKILNNSFIDLPTPVNISSWWNFGSLLGACLIIQILTGLFLAMHYTSDTLTAFSSVTHICRDVNYGWIIRYLHANGASMFFLCLYAHIGRGIYYGSYLYPETWNIGIVLLLTVMATAFMGYVLPWGQMSFWGATVITNLLSAIPYIGTNLVEWVWGGFSVDKATLTRFFALHFILPFIVTALVMVHLLFLHETGSNNPTGLISDSDKIPFHPYYSVKDLLGLFLLILVLLLLTLFSPDMLGDPDNYTPANPLNTPPHIKPEWYFLFRYAILRSIPNKLGGVLALVLSILILALLPLLHTSKQRSLSFRPLSQCLFWILVADLITLTWIGGQPVEHPYIIIGQLASILYFSIILIFMPIAGLIENHLLKW</sequence>
<dbReference type="EMBL" id="U07564">
    <property type="protein sequence ID" value="AAA19917.1"/>
    <property type="molecule type" value="Genomic_DNA"/>
</dbReference>
<dbReference type="EMBL" id="AJ421723">
    <property type="protein sequence ID" value="CAD18920.1"/>
    <property type="molecule type" value="Genomic_DNA"/>
</dbReference>
<dbReference type="EMBL" id="AY075116">
    <property type="protein sequence ID" value="AAL79374.1"/>
    <property type="molecule type" value="Genomic_DNA"/>
</dbReference>
<dbReference type="RefSeq" id="NP_536770.1">
    <property type="nucleotide sequence ID" value="NC_003314.1"/>
</dbReference>
<dbReference type="SMR" id="Q33401"/>
<dbReference type="GeneID" id="804498"/>
<dbReference type="CTD" id="4519"/>
<dbReference type="GO" id="GO:0005743">
    <property type="term" value="C:mitochondrial inner membrane"/>
    <property type="evidence" value="ECO:0007669"/>
    <property type="project" value="UniProtKB-SubCell"/>
</dbReference>
<dbReference type="GO" id="GO:0045275">
    <property type="term" value="C:respiratory chain complex III"/>
    <property type="evidence" value="ECO:0007669"/>
    <property type="project" value="InterPro"/>
</dbReference>
<dbReference type="GO" id="GO:0046872">
    <property type="term" value="F:metal ion binding"/>
    <property type="evidence" value="ECO:0007669"/>
    <property type="project" value="UniProtKB-KW"/>
</dbReference>
<dbReference type="GO" id="GO:0008121">
    <property type="term" value="F:ubiquinol-cytochrome-c reductase activity"/>
    <property type="evidence" value="ECO:0007669"/>
    <property type="project" value="InterPro"/>
</dbReference>
<dbReference type="GO" id="GO:0006122">
    <property type="term" value="P:mitochondrial electron transport, ubiquinol to cytochrome c"/>
    <property type="evidence" value="ECO:0007669"/>
    <property type="project" value="TreeGrafter"/>
</dbReference>
<dbReference type="CDD" id="cd00290">
    <property type="entry name" value="cytochrome_b_C"/>
    <property type="match status" value="1"/>
</dbReference>
<dbReference type="CDD" id="cd00284">
    <property type="entry name" value="Cytochrome_b_N"/>
    <property type="match status" value="1"/>
</dbReference>
<dbReference type="FunFam" id="1.20.810.10:FF:000002">
    <property type="entry name" value="Cytochrome b"/>
    <property type="match status" value="1"/>
</dbReference>
<dbReference type="Gene3D" id="1.20.810.10">
    <property type="entry name" value="Cytochrome Bc1 Complex, Chain C"/>
    <property type="match status" value="1"/>
</dbReference>
<dbReference type="InterPro" id="IPR005798">
    <property type="entry name" value="Cyt_b/b6_C"/>
</dbReference>
<dbReference type="InterPro" id="IPR036150">
    <property type="entry name" value="Cyt_b/b6_C_sf"/>
</dbReference>
<dbReference type="InterPro" id="IPR005797">
    <property type="entry name" value="Cyt_b/b6_N"/>
</dbReference>
<dbReference type="InterPro" id="IPR027387">
    <property type="entry name" value="Cytb/b6-like_sf"/>
</dbReference>
<dbReference type="InterPro" id="IPR030689">
    <property type="entry name" value="Cytochrome_b"/>
</dbReference>
<dbReference type="InterPro" id="IPR048260">
    <property type="entry name" value="Cytochrome_b_C_euk/bac"/>
</dbReference>
<dbReference type="InterPro" id="IPR048259">
    <property type="entry name" value="Cytochrome_b_N_euk/bac"/>
</dbReference>
<dbReference type="InterPro" id="IPR016174">
    <property type="entry name" value="Di-haem_cyt_TM"/>
</dbReference>
<dbReference type="PANTHER" id="PTHR19271">
    <property type="entry name" value="CYTOCHROME B"/>
    <property type="match status" value="1"/>
</dbReference>
<dbReference type="PANTHER" id="PTHR19271:SF16">
    <property type="entry name" value="CYTOCHROME B"/>
    <property type="match status" value="1"/>
</dbReference>
<dbReference type="Pfam" id="PF00032">
    <property type="entry name" value="Cytochrom_B_C"/>
    <property type="match status" value="1"/>
</dbReference>
<dbReference type="Pfam" id="PF00033">
    <property type="entry name" value="Cytochrome_B"/>
    <property type="match status" value="1"/>
</dbReference>
<dbReference type="PIRSF" id="PIRSF038885">
    <property type="entry name" value="COB"/>
    <property type="match status" value="1"/>
</dbReference>
<dbReference type="SUPFAM" id="SSF81648">
    <property type="entry name" value="a domain/subunit of cytochrome bc1 complex (Ubiquinol-cytochrome c reductase)"/>
    <property type="match status" value="1"/>
</dbReference>
<dbReference type="SUPFAM" id="SSF81342">
    <property type="entry name" value="Transmembrane di-heme cytochromes"/>
    <property type="match status" value="1"/>
</dbReference>
<dbReference type="PROSITE" id="PS51003">
    <property type="entry name" value="CYTB_CTER"/>
    <property type="match status" value="1"/>
</dbReference>
<dbReference type="PROSITE" id="PS51002">
    <property type="entry name" value="CYTB_NTER"/>
    <property type="match status" value="1"/>
</dbReference>
<name>CYB_DUGDU</name>
<reference key="1">
    <citation type="journal article" date="1994" name="J. Mammal. Evol.">
        <title>Cytochrome b gene of marine mammals: phylogeny and evolution.</title>
        <authorList>
            <person name="Irwin D.M."/>
            <person name="Arnason U."/>
        </authorList>
    </citation>
    <scope>NUCLEOTIDE SEQUENCE [GENOMIC DNA]</scope>
</reference>
<reference key="2">
    <citation type="journal article" date="2002" name="Proc. Natl. Acad. Sci. U.S.A.">
        <title>Mammalian mitogenomic relationships and the root of the eutherian tree.</title>
        <authorList>
            <person name="Arnason U."/>
            <person name="Adegoke J.A."/>
            <person name="Bodin K."/>
            <person name="Born E.W."/>
            <person name="Esa Y.B."/>
            <person name="Gullberg A."/>
            <person name="Nilsson M."/>
            <person name="Short R.V."/>
            <person name="Xu X."/>
            <person name="Janke A."/>
        </authorList>
    </citation>
    <scope>NUCLEOTIDE SEQUENCE [GENOMIC DNA]</scope>
</reference>
<reference key="3">
    <citation type="submission" date="2002-01" db="EMBL/GenBank/DDBJ databases">
        <title>Complete mitochondrial genome of a dugong.</title>
        <authorList>
            <person name="McLenachan P.A."/>
            <person name="Phillips M.J."/>
            <person name="Penny D."/>
        </authorList>
    </citation>
    <scope>NUCLEOTIDE SEQUENCE [GENOMIC DNA]</scope>
</reference>
<evidence type="ECO:0000250" key="1"/>
<evidence type="ECO:0000250" key="2">
    <source>
        <dbReference type="UniProtKB" id="P00157"/>
    </source>
</evidence>
<evidence type="ECO:0000255" key="3">
    <source>
        <dbReference type="PROSITE-ProRule" id="PRU00967"/>
    </source>
</evidence>
<evidence type="ECO:0000255" key="4">
    <source>
        <dbReference type="PROSITE-ProRule" id="PRU00968"/>
    </source>
</evidence>
<evidence type="ECO:0000305" key="5"/>
<comment type="function">
    <text evidence="2">Component of the ubiquinol-cytochrome c reductase complex (complex III or cytochrome b-c1 complex) that is part of the mitochondrial respiratory chain. The b-c1 complex mediates electron transfer from ubiquinol to cytochrome c. Contributes to the generation of a proton gradient across the mitochondrial membrane that is then used for ATP synthesis.</text>
</comment>
<comment type="cofactor">
    <cofactor evidence="2">
        <name>heme b</name>
        <dbReference type="ChEBI" id="CHEBI:60344"/>
    </cofactor>
    <text evidence="2">Binds 2 heme b groups non-covalently.</text>
</comment>
<comment type="subunit">
    <text evidence="2">The cytochrome bc1 complex contains 11 subunits: 3 respiratory subunits (MT-CYB, CYC1 and UQCRFS1), 2 core proteins (UQCRC1 and UQCRC2) and 6 low-molecular weight proteins (UQCRH/QCR6, UQCRB/QCR7, UQCRQ/QCR8, UQCR10/QCR9, UQCR11/QCR10 and a cleavage product of UQCRFS1). This cytochrome bc1 complex then forms a dimer.</text>
</comment>
<comment type="subcellular location">
    <subcellularLocation>
        <location evidence="2">Mitochondrion inner membrane</location>
        <topology evidence="2">Multi-pass membrane protein</topology>
    </subcellularLocation>
</comment>
<comment type="miscellaneous">
    <text evidence="1">Heme 1 (or BL or b562) is low-potential and absorbs at about 562 nm, and heme 2 (or BH or b566) is high-potential and absorbs at about 566 nm.</text>
</comment>
<comment type="similarity">
    <text evidence="3 4">Belongs to the cytochrome b family.</text>
</comment>
<comment type="caution">
    <text evidence="2">The full-length protein contains only eight transmembrane helices, not nine as predicted by bioinformatics tools.</text>
</comment>
<organism>
    <name type="scientific">Dugong dugon</name>
    <name type="common">Dugong</name>
    <name type="synonym">Trichechus dugon</name>
    <dbReference type="NCBI Taxonomy" id="29137"/>
    <lineage>
        <taxon>Eukaryota</taxon>
        <taxon>Metazoa</taxon>
        <taxon>Chordata</taxon>
        <taxon>Craniata</taxon>
        <taxon>Vertebrata</taxon>
        <taxon>Euteleostomi</taxon>
        <taxon>Mammalia</taxon>
        <taxon>Eutheria</taxon>
        <taxon>Afrotheria</taxon>
        <taxon>Sirenia</taxon>
        <taxon>Dugongidae</taxon>
        <taxon>Dugong</taxon>
    </lineage>
</organism>
<protein>
    <recommendedName>
        <fullName>Cytochrome b</fullName>
    </recommendedName>
    <alternativeName>
        <fullName>Complex III subunit 3</fullName>
    </alternativeName>
    <alternativeName>
        <fullName>Complex III subunit III</fullName>
    </alternativeName>
    <alternativeName>
        <fullName>Cytochrome b-c1 complex subunit 3</fullName>
    </alternativeName>
    <alternativeName>
        <fullName>Ubiquinol-cytochrome-c reductase complex cytochrome b subunit</fullName>
    </alternativeName>
</protein>